<comment type="function">
    <text evidence="3">Probable ion channel inhibitor. Shows insecticidal activity when injected into mealworms.</text>
</comment>
<comment type="subcellular location">
    <subcellularLocation>
        <location>Secreted</location>
    </subcellularLocation>
</comment>
<comment type="tissue specificity">
    <text>Expressed by the venom gland.</text>
</comment>
<comment type="domain">
    <text evidence="1">The presence of a 'disulfide through disulfide knot' structurally defines this protein as a knottin.</text>
</comment>
<comment type="similarity">
    <text evidence="5">Belongs to the neurotoxin 10 (Hwtx-1) family. 46 (Jztx-7/10/12) subfamily.</text>
</comment>
<evidence type="ECO:0000250" key="1"/>
<evidence type="ECO:0000255" key="2"/>
<evidence type="ECO:0000269" key="3">
    <source>
    </source>
</evidence>
<evidence type="ECO:0000303" key="4">
    <source>
    </source>
</evidence>
<evidence type="ECO:0000305" key="5"/>
<accession>P0DM67</accession>
<protein>
    <recommendedName>
        <fullName>Orally active insecticidal peptide-3</fullName>
        <shortName evidence="4">Toxin OAIP 3</shortName>
    </recommendedName>
</protein>
<dbReference type="SMR" id="P0DM67"/>
<dbReference type="GO" id="GO:0005576">
    <property type="term" value="C:extracellular region"/>
    <property type="evidence" value="ECO:0007669"/>
    <property type="project" value="UniProtKB-SubCell"/>
</dbReference>
<dbReference type="GO" id="GO:0008200">
    <property type="term" value="F:ion channel inhibitor activity"/>
    <property type="evidence" value="ECO:0007669"/>
    <property type="project" value="InterPro"/>
</dbReference>
<dbReference type="GO" id="GO:0090729">
    <property type="term" value="F:toxin activity"/>
    <property type="evidence" value="ECO:0007669"/>
    <property type="project" value="UniProtKB-KW"/>
</dbReference>
<dbReference type="InterPro" id="IPR011696">
    <property type="entry name" value="Huwentoxin-1"/>
</dbReference>
<dbReference type="InterPro" id="IPR013140">
    <property type="entry name" value="Huwentoxin_CS1"/>
</dbReference>
<dbReference type="Pfam" id="PF07740">
    <property type="entry name" value="Toxin_12"/>
    <property type="match status" value="1"/>
</dbReference>
<dbReference type="SUPFAM" id="SSF57059">
    <property type="entry name" value="omega toxin-like"/>
    <property type="match status" value="1"/>
</dbReference>
<dbReference type="PROSITE" id="PS60021">
    <property type="entry name" value="HWTX_1"/>
    <property type="match status" value="1"/>
</dbReference>
<keyword id="KW-0027">Amidation</keyword>
<keyword id="KW-0903">Direct protein sequencing</keyword>
<keyword id="KW-1015">Disulfide bond</keyword>
<keyword id="KW-0872">Ion channel impairing toxin</keyword>
<keyword id="KW-0960">Knottin</keyword>
<keyword id="KW-0964">Secreted</keyword>
<keyword id="KW-0732">Signal</keyword>
<keyword id="KW-0800">Toxin</keyword>
<reference key="1">
    <citation type="journal article" date="2013" name="PLoS ONE">
        <title>SVM-based prediction of propeptide cleavage sites in spider toxins identifies toxin innovation in an australian tarantula.</title>
        <authorList>
            <person name="Wong E.S."/>
            <person name="Hardy M.C."/>
            <person name="Wood D."/>
            <person name="Bailey T."/>
            <person name="King G.F."/>
        </authorList>
    </citation>
    <scope>NUCLEOTIDE SEQUENCE [MRNA]</scope>
    <scope>PARTIAL PROTEIN SEQUENCE</scope>
    <scope>FUNCTION</scope>
    <source>
        <tissue>Venom</tissue>
        <tissue>Venom gland</tissue>
    </source>
</reference>
<feature type="signal peptide" evidence="2">
    <location>
        <begin position="1"/>
        <end position="21"/>
    </location>
</feature>
<feature type="propeptide" id="PRO_0000424396" evidence="3">
    <location>
        <begin position="22"/>
        <end position="29"/>
    </location>
</feature>
<feature type="chain" id="PRO_0000424397" description="Orally active insecticidal peptide-3">
    <location>
        <begin position="30"/>
        <end position="62"/>
    </location>
</feature>
<feature type="modified residue" description="Proline amide" evidence="1">
    <location>
        <position position="62"/>
    </location>
</feature>
<feature type="disulfide bond" evidence="1">
    <location>
        <begin position="31"/>
        <end position="46"/>
    </location>
</feature>
<feature type="disulfide bond" evidence="1">
    <location>
        <begin position="38"/>
        <end position="51"/>
    </location>
</feature>
<feature type="disulfide bond" evidence="1">
    <location>
        <begin position="45"/>
        <end position="58"/>
    </location>
</feature>
<organism>
    <name type="scientific">Selenotypus plumipes</name>
    <name type="common">Australian featherleg tarantula</name>
    <dbReference type="NCBI Taxonomy" id="1395661"/>
    <lineage>
        <taxon>Eukaryota</taxon>
        <taxon>Metazoa</taxon>
        <taxon>Ecdysozoa</taxon>
        <taxon>Arthropoda</taxon>
        <taxon>Chelicerata</taxon>
        <taxon>Arachnida</taxon>
        <taxon>Araneae</taxon>
        <taxon>Mygalomorphae</taxon>
        <taxon>Theraphosidae</taxon>
        <taxon>Selenotypus</taxon>
    </lineage>
</organism>
<proteinExistence type="evidence at protein level"/>
<sequence>MKTSVLFAILGLALLFCLSFGVELEETGRECGGLMTRCDGKTTFCCSGMNCSPTWKWCVYAPGRR</sequence>
<name>TX3_SELPU</name>